<sequence>MMSQSDSLKGRKVVFHDMCLRDGMHAKREQIGVEQMIAVATALDAAGVPYIQVTHGAGLGGNSLQHGFAPHSNEEYIGAVAAKMKQAKVSVLLIPGLGTMKELQSAFDCGARSVHVATHCTEADTSPQHIAFARKLGMDTSGFLMMSHLNDPAGIARQGKLMESYGAQTVYVTDSAGYMLPEDVKARVGALREVLAPETGIGFHGHHNLGMGIANSIAAIEAGASRIDGSVAGLGAGAGNTPLEVFAAVCERMGIDTGVDLFRLMDVAEDIIVPMMEHVVRVDRESLTLGYAGVYSTFLLHSKRAAERFGVPARDILVELGRKKMIGGQEDMILDTAMSMAKARGLLKSA</sequence>
<keyword id="KW-0058">Aromatic hydrocarbons catabolism</keyword>
<keyword id="KW-0456">Lyase</keyword>
<keyword id="KW-0464">Manganese</keyword>
<keyword id="KW-0479">Metal-binding</keyword>
<name>HOA3_AZOVD</name>
<organism>
    <name type="scientific">Azotobacter vinelandii (strain DJ / ATCC BAA-1303)</name>
    <dbReference type="NCBI Taxonomy" id="322710"/>
    <lineage>
        <taxon>Bacteria</taxon>
        <taxon>Pseudomonadati</taxon>
        <taxon>Pseudomonadota</taxon>
        <taxon>Gammaproteobacteria</taxon>
        <taxon>Pseudomonadales</taxon>
        <taxon>Pseudomonadaceae</taxon>
        <taxon>Azotobacter</taxon>
    </lineage>
</organism>
<protein>
    <recommendedName>
        <fullName evidence="1">4-hydroxy-2-oxovalerate aldolase 3</fullName>
        <shortName evidence="1">HOA 3</shortName>
        <ecNumber evidence="1">4.1.3.39</ecNumber>
    </recommendedName>
    <alternativeName>
        <fullName evidence="1">4-hydroxy-2-keto-pentanoic acid aldolase 3</fullName>
    </alternativeName>
    <alternativeName>
        <fullName evidence="1">4-hydroxy-2-oxopentanoate aldolase 3</fullName>
    </alternativeName>
</protein>
<proteinExistence type="inferred from homology"/>
<reference key="1">
    <citation type="journal article" date="2009" name="J. Bacteriol.">
        <title>Genome sequence of Azotobacter vinelandii, an obligate aerobe specialized to support diverse anaerobic metabolic processes.</title>
        <authorList>
            <person name="Setubal J.C."/>
            <person name="Dos Santos P."/>
            <person name="Goldman B.S."/>
            <person name="Ertesvaag H."/>
            <person name="Espin G."/>
            <person name="Rubio L.M."/>
            <person name="Valla S."/>
            <person name="Almeida N.F."/>
            <person name="Balasubramanian D."/>
            <person name="Cromes L."/>
            <person name="Curatti L."/>
            <person name="Du Z."/>
            <person name="Godsy E."/>
            <person name="Goodner B."/>
            <person name="Hellner-Burris K."/>
            <person name="Hernandez J.A."/>
            <person name="Houmiel K."/>
            <person name="Imperial J."/>
            <person name="Kennedy C."/>
            <person name="Larson T.J."/>
            <person name="Latreille P."/>
            <person name="Ligon L.S."/>
            <person name="Lu J."/>
            <person name="Maerk M."/>
            <person name="Miller N.M."/>
            <person name="Norton S."/>
            <person name="O'Carroll I.P."/>
            <person name="Paulsen I."/>
            <person name="Raulfs E.C."/>
            <person name="Roemer R."/>
            <person name="Rosser J."/>
            <person name="Segura D."/>
            <person name="Slater S."/>
            <person name="Stricklin S.L."/>
            <person name="Studholme D.J."/>
            <person name="Sun J."/>
            <person name="Viana C.J."/>
            <person name="Wallin E."/>
            <person name="Wang B."/>
            <person name="Wheeler C."/>
            <person name="Zhu H."/>
            <person name="Dean D.R."/>
            <person name="Dixon R."/>
            <person name="Wood D."/>
        </authorList>
    </citation>
    <scope>NUCLEOTIDE SEQUENCE [LARGE SCALE GENOMIC DNA]</scope>
    <source>
        <strain>DJ / ATCC BAA-1303</strain>
    </source>
</reference>
<evidence type="ECO:0000255" key="1">
    <source>
        <dbReference type="HAMAP-Rule" id="MF_01656"/>
    </source>
</evidence>
<accession>C1DN55</accession>
<feature type="chain" id="PRO_0000387785" description="4-hydroxy-2-oxovalerate aldolase 3">
    <location>
        <begin position="1"/>
        <end position="350"/>
    </location>
</feature>
<feature type="domain" description="Pyruvate carboxyltransferase" evidence="1">
    <location>
        <begin position="13"/>
        <end position="265"/>
    </location>
</feature>
<feature type="active site" description="Proton acceptor" evidence="1">
    <location>
        <position position="25"/>
    </location>
</feature>
<feature type="binding site" evidence="1">
    <location>
        <begin position="21"/>
        <end position="22"/>
    </location>
    <ligand>
        <name>substrate</name>
    </ligand>
</feature>
<feature type="binding site" evidence="1">
    <location>
        <position position="22"/>
    </location>
    <ligand>
        <name>Mn(2+)</name>
        <dbReference type="ChEBI" id="CHEBI:29035"/>
    </ligand>
</feature>
<feature type="binding site" evidence="1">
    <location>
        <position position="175"/>
    </location>
    <ligand>
        <name>substrate</name>
    </ligand>
</feature>
<feature type="binding site" evidence="1">
    <location>
        <position position="204"/>
    </location>
    <ligand>
        <name>Mn(2+)</name>
        <dbReference type="ChEBI" id="CHEBI:29035"/>
    </ligand>
</feature>
<feature type="binding site" evidence="1">
    <location>
        <position position="204"/>
    </location>
    <ligand>
        <name>substrate</name>
    </ligand>
</feature>
<feature type="binding site" evidence="1">
    <location>
        <position position="206"/>
    </location>
    <ligand>
        <name>Mn(2+)</name>
        <dbReference type="ChEBI" id="CHEBI:29035"/>
    </ligand>
</feature>
<feature type="binding site" evidence="1">
    <location>
        <position position="295"/>
    </location>
    <ligand>
        <name>substrate</name>
    </ligand>
</feature>
<feature type="site" description="Transition state stabilizer" evidence="1">
    <location>
        <position position="21"/>
    </location>
</feature>
<dbReference type="EC" id="4.1.3.39" evidence="1"/>
<dbReference type="EMBL" id="CP001157">
    <property type="protein sequence ID" value="ACO79222.1"/>
    <property type="molecule type" value="Genomic_DNA"/>
</dbReference>
<dbReference type="RefSeq" id="WP_012701608.1">
    <property type="nucleotide sequence ID" value="NC_012560.1"/>
</dbReference>
<dbReference type="SMR" id="C1DN55"/>
<dbReference type="STRING" id="322710.Avin_30570"/>
<dbReference type="EnsemblBacteria" id="ACO79222">
    <property type="protein sequence ID" value="ACO79222"/>
    <property type="gene ID" value="Avin_30570"/>
</dbReference>
<dbReference type="GeneID" id="88186150"/>
<dbReference type="KEGG" id="avn:Avin_30570"/>
<dbReference type="eggNOG" id="COG0119">
    <property type="taxonomic scope" value="Bacteria"/>
</dbReference>
<dbReference type="HOGENOM" id="CLU_049173_0_0_6"/>
<dbReference type="Proteomes" id="UP000002424">
    <property type="component" value="Chromosome"/>
</dbReference>
<dbReference type="GO" id="GO:0003852">
    <property type="term" value="F:2-isopropylmalate synthase activity"/>
    <property type="evidence" value="ECO:0007669"/>
    <property type="project" value="TreeGrafter"/>
</dbReference>
<dbReference type="GO" id="GO:0008701">
    <property type="term" value="F:4-hydroxy-2-oxovalerate aldolase activity"/>
    <property type="evidence" value="ECO:0007669"/>
    <property type="project" value="UniProtKB-UniRule"/>
</dbReference>
<dbReference type="GO" id="GO:0030145">
    <property type="term" value="F:manganese ion binding"/>
    <property type="evidence" value="ECO:0007669"/>
    <property type="project" value="UniProtKB-UniRule"/>
</dbReference>
<dbReference type="GO" id="GO:0009056">
    <property type="term" value="P:catabolic process"/>
    <property type="evidence" value="ECO:0007669"/>
    <property type="project" value="UniProtKB-KW"/>
</dbReference>
<dbReference type="GO" id="GO:0009098">
    <property type="term" value="P:L-leucine biosynthetic process"/>
    <property type="evidence" value="ECO:0007669"/>
    <property type="project" value="TreeGrafter"/>
</dbReference>
<dbReference type="CDD" id="cd07943">
    <property type="entry name" value="DRE_TIM_HOA"/>
    <property type="match status" value="1"/>
</dbReference>
<dbReference type="Gene3D" id="1.10.8.60">
    <property type="match status" value="1"/>
</dbReference>
<dbReference type="Gene3D" id="3.20.20.70">
    <property type="entry name" value="Aldolase class I"/>
    <property type="match status" value="1"/>
</dbReference>
<dbReference type="HAMAP" id="MF_01656">
    <property type="entry name" value="HOA"/>
    <property type="match status" value="1"/>
</dbReference>
<dbReference type="InterPro" id="IPR050073">
    <property type="entry name" value="2-IPM_HCS-like"/>
</dbReference>
<dbReference type="InterPro" id="IPR017629">
    <property type="entry name" value="4OH_2_O-val_aldolase"/>
</dbReference>
<dbReference type="InterPro" id="IPR013785">
    <property type="entry name" value="Aldolase_TIM"/>
</dbReference>
<dbReference type="InterPro" id="IPR012425">
    <property type="entry name" value="DmpG_comm"/>
</dbReference>
<dbReference type="InterPro" id="IPR035685">
    <property type="entry name" value="DRE_TIM_HOA"/>
</dbReference>
<dbReference type="InterPro" id="IPR000891">
    <property type="entry name" value="PYR_CT"/>
</dbReference>
<dbReference type="NCBIfam" id="TIGR03217">
    <property type="entry name" value="4OH_2_O_val_ald"/>
    <property type="match status" value="1"/>
</dbReference>
<dbReference type="NCBIfam" id="NF006049">
    <property type="entry name" value="PRK08195.1"/>
    <property type="match status" value="1"/>
</dbReference>
<dbReference type="PANTHER" id="PTHR10277:SF9">
    <property type="entry name" value="2-ISOPROPYLMALATE SYNTHASE 1, CHLOROPLASTIC-RELATED"/>
    <property type="match status" value="1"/>
</dbReference>
<dbReference type="PANTHER" id="PTHR10277">
    <property type="entry name" value="HOMOCITRATE SYNTHASE-RELATED"/>
    <property type="match status" value="1"/>
</dbReference>
<dbReference type="Pfam" id="PF07836">
    <property type="entry name" value="DmpG_comm"/>
    <property type="match status" value="1"/>
</dbReference>
<dbReference type="Pfam" id="PF00682">
    <property type="entry name" value="HMGL-like"/>
    <property type="match status" value="1"/>
</dbReference>
<dbReference type="SUPFAM" id="SSF51569">
    <property type="entry name" value="Aldolase"/>
    <property type="match status" value="1"/>
</dbReference>
<dbReference type="SUPFAM" id="SSF89000">
    <property type="entry name" value="post-HMGL domain-like"/>
    <property type="match status" value="1"/>
</dbReference>
<dbReference type="PROSITE" id="PS50991">
    <property type="entry name" value="PYR_CT"/>
    <property type="match status" value="1"/>
</dbReference>
<comment type="catalytic activity">
    <reaction evidence="1">
        <text>(S)-4-hydroxy-2-oxopentanoate = acetaldehyde + pyruvate</text>
        <dbReference type="Rhea" id="RHEA:22624"/>
        <dbReference type="ChEBI" id="CHEBI:15343"/>
        <dbReference type="ChEBI" id="CHEBI:15361"/>
        <dbReference type="ChEBI" id="CHEBI:73143"/>
        <dbReference type="EC" id="4.1.3.39"/>
    </reaction>
</comment>
<comment type="similarity">
    <text evidence="1">Belongs to the 4-hydroxy-2-oxovalerate aldolase family.</text>
</comment>
<gene>
    <name type="primary">lapG</name>
    <name type="ordered locus">Avin_30570</name>
</gene>